<organism>
    <name type="scientific">Arabidopsis thaliana</name>
    <name type="common">Mouse-ear cress</name>
    <dbReference type="NCBI Taxonomy" id="3702"/>
    <lineage>
        <taxon>Eukaryota</taxon>
        <taxon>Viridiplantae</taxon>
        <taxon>Streptophyta</taxon>
        <taxon>Embryophyta</taxon>
        <taxon>Tracheophyta</taxon>
        <taxon>Spermatophyta</taxon>
        <taxon>Magnoliopsida</taxon>
        <taxon>eudicotyledons</taxon>
        <taxon>Gunneridae</taxon>
        <taxon>Pentapetalae</taxon>
        <taxon>rosids</taxon>
        <taxon>malvids</taxon>
        <taxon>Brassicales</taxon>
        <taxon>Brassicaceae</taxon>
        <taxon>Camelineae</taxon>
        <taxon>Arabidopsis</taxon>
    </lineage>
</organism>
<evidence type="ECO:0000255" key="1"/>
<evidence type="ECO:0000269" key="2">
    <source>
    </source>
</evidence>
<evidence type="ECO:0000305" key="3"/>
<evidence type="ECO:0000305" key="4">
    <source>
    </source>
</evidence>
<comment type="function">
    <text>May serve as docking site to facilitate the association of other proteins to the plasma membrane.</text>
</comment>
<comment type="subcellular location">
    <subcellularLocation>
        <location evidence="2">Cell membrane</location>
        <topology evidence="2">Lipid-anchor</topology>
    </subcellularLocation>
</comment>
<comment type="tissue specificity">
    <text evidence="2">Ubiquitous, but three fold higher expression in stamens.</text>
</comment>
<comment type="induction">
    <text evidence="2">Not induced by pathogens, cycloheximide and ozone treatment.</text>
</comment>
<comment type="PTM">
    <text evidence="2">Acylated protein. Probably modified with palmitate (PubMed:16831869).</text>
</comment>
<comment type="miscellaneous">
    <text>Heat stable and remains soluble at temperatures exceeding 90 degrees Celsius.</text>
</comment>
<comment type="sequence caution" evidence="3">
    <conflict type="erroneous gene model prediction">
        <sequence resource="EMBL-CDS" id="CAC01745"/>
    </conflict>
</comment>
<feature type="chain" id="PRO_0000248164" description="Membrane-anchored ubiquitin-fold protein 2">
    <location>
        <begin position="1"/>
        <end position="124"/>
    </location>
</feature>
<feature type="domain" description="Ubiquitin-like">
    <location>
        <begin position="8"/>
        <end position="74"/>
    </location>
</feature>
<feature type="lipid moiety-binding region" description="S-palmitoyl cysteine" evidence="1">
    <location>
        <position position="115"/>
    </location>
</feature>
<feature type="lipid moiety-binding region" description="S-palmitoyl cysteine" evidence="1">
    <location>
        <position position="117"/>
    </location>
</feature>
<feature type="lipid moiety-binding region" description="S-palmitoyl cysteine" evidence="4">
    <location>
        <position position="119"/>
    </location>
</feature>
<feature type="lipid moiety-binding region" description="S-palmitoyl cysteine" evidence="4">
    <location>
        <position position="124"/>
    </location>
</feature>
<feature type="mutagenesis site" description="Loss of membrane localization." evidence="2">
    <original>CVCLCFGARC</original>
    <variation>SVSLSFGARS</variation>
    <location>
        <begin position="115"/>
        <end position="124"/>
    </location>
</feature>
<feature type="mutagenesis site" description="No effect on localization." evidence="2">
    <original>C</original>
    <variation>S</variation>
    <location>
        <position position="115"/>
    </location>
</feature>
<feature type="mutagenesis site" description="No effect on localization." evidence="2">
    <original>C</original>
    <variation>S</variation>
    <location>
        <position position="117"/>
    </location>
</feature>
<feature type="mutagenesis site" description="Loss of membrane localization." evidence="2">
    <original>C</original>
    <variation>S</variation>
    <location>
        <position position="119"/>
    </location>
</feature>
<feature type="mutagenesis site" description="Loss of membrane localization." evidence="2">
    <original>C</original>
    <variation>S</variation>
    <location>
        <position position="124"/>
    </location>
</feature>
<protein>
    <recommendedName>
        <fullName>Membrane-anchored ubiquitin-fold protein 2</fullName>
        <shortName>AtMUB2</shortName>
        <shortName>Membrane-anchored ub-fold protein 2</shortName>
    </recommendedName>
    <alternativeName>
        <fullName>NTGP5</fullName>
    </alternativeName>
</protein>
<reference key="1">
    <citation type="journal article" date="2000" name="Nature">
        <title>Sequence and analysis of chromosome 5 of the plant Arabidopsis thaliana.</title>
        <authorList>
            <person name="Tabata S."/>
            <person name="Kaneko T."/>
            <person name="Nakamura Y."/>
            <person name="Kotani H."/>
            <person name="Kato T."/>
            <person name="Asamizu E."/>
            <person name="Miyajima N."/>
            <person name="Sasamoto S."/>
            <person name="Kimura T."/>
            <person name="Hosouchi T."/>
            <person name="Kawashima K."/>
            <person name="Kohara M."/>
            <person name="Matsumoto M."/>
            <person name="Matsuno A."/>
            <person name="Muraki A."/>
            <person name="Nakayama S."/>
            <person name="Nakazaki N."/>
            <person name="Naruo K."/>
            <person name="Okumura S."/>
            <person name="Shinpo S."/>
            <person name="Takeuchi C."/>
            <person name="Wada T."/>
            <person name="Watanabe A."/>
            <person name="Yamada M."/>
            <person name="Yasuda M."/>
            <person name="Sato S."/>
            <person name="de la Bastide M."/>
            <person name="Huang E."/>
            <person name="Spiegel L."/>
            <person name="Gnoj L."/>
            <person name="O'Shaughnessy A."/>
            <person name="Preston R."/>
            <person name="Habermann K."/>
            <person name="Murray J."/>
            <person name="Johnson D."/>
            <person name="Rohlfing T."/>
            <person name="Nelson J."/>
            <person name="Stoneking T."/>
            <person name="Pepin K."/>
            <person name="Spieth J."/>
            <person name="Sekhon M."/>
            <person name="Armstrong J."/>
            <person name="Becker M."/>
            <person name="Belter E."/>
            <person name="Cordum H."/>
            <person name="Cordes M."/>
            <person name="Courtney L."/>
            <person name="Courtney W."/>
            <person name="Dante M."/>
            <person name="Du H."/>
            <person name="Edwards J."/>
            <person name="Fryman J."/>
            <person name="Haakensen B."/>
            <person name="Lamar E."/>
            <person name="Latreille P."/>
            <person name="Leonard S."/>
            <person name="Meyer R."/>
            <person name="Mulvaney E."/>
            <person name="Ozersky P."/>
            <person name="Riley A."/>
            <person name="Strowmatt C."/>
            <person name="Wagner-McPherson C."/>
            <person name="Wollam A."/>
            <person name="Yoakum M."/>
            <person name="Bell M."/>
            <person name="Dedhia N."/>
            <person name="Parnell L."/>
            <person name="Shah R."/>
            <person name="Rodriguez M."/>
            <person name="Hoon See L."/>
            <person name="Vil D."/>
            <person name="Baker J."/>
            <person name="Kirchoff K."/>
            <person name="Toth K."/>
            <person name="King L."/>
            <person name="Bahret A."/>
            <person name="Miller B."/>
            <person name="Marra M.A."/>
            <person name="Martienssen R."/>
            <person name="McCombie W.R."/>
            <person name="Wilson R.K."/>
            <person name="Murphy G."/>
            <person name="Bancroft I."/>
            <person name="Volckaert G."/>
            <person name="Wambutt R."/>
            <person name="Duesterhoeft A."/>
            <person name="Stiekema W."/>
            <person name="Pohl T."/>
            <person name="Entian K.-D."/>
            <person name="Terryn N."/>
            <person name="Hartley N."/>
            <person name="Bent E."/>
            <person name="Johnson S."/>
            <person name="Langham S.-A."/>
            <person name="McCullagh B."/>
            <person name="Robben J."/>
            <person name="Grymonprez B."/>
            <person name="Zimmermann W."/>
            <person name="Ramsperger U."/>
            <person name="Wedler H."/>
            <person name="Balke K."/>
            <person name="Wedler E."/>
            <person name="Peters S."/>
            <person name="van Staveren M."/>
            <person name="Dirkse W."/>
            <person name="Mooijman P."/>
            <person name="Klein Lankhorst R."/>
            <person name="Weitzenegger T."/>
            <person name="Bothe G."/>
            <person name="Rose M."/>
            <person name="Hauf J."/>
            <person name="Berneiser S."/>
            <person name="Hempel S."/>
            <person name="Feldpausch M."/>
            <person name="Lamberth S."/>
            <person name="Villarroel R."/>
            <person name="Gielen J."/>
            <person name="Ardiles W."/>
            <person name="Bents O."/>
            <person name="Lemcke K."/>
            <person name="Kolesov G."/>
            <person name="Mayer K.F.X."/>
            <person name="Rudd S."/>
            <person name="Schoof H."/>
            <person name="Schueller C."/>
            <person name="Zaccaria P."/>
            <person name="Mewes H.-W."/>
            <person name="Bevan M."/>
            <person name="Fransz P.F."/>
        </authorList>
    </citation>
    <scope>NUCLEOTIDE SEQUENCE [LARGE SCALE GENOMIC DNA]</scope>
    <source>
        <strain>cv. Columbia</strain>
    </source>
</reference>
<reference key="2">
    <citation type="journal article" date="2017" name="Plant J.">
        <title>Araport11: a complete reannotation of the Arabidopsis thaliana reference genome.</title>
        <authorList>
            <person name="Cheng C.Y."/>
            <person name="Krishnakumar V."/>
            <person name="Chan A.P."/>
            <person name="Thibaud-Nissen F."/>
            <person name="Schobel S."/>
            <person name="Town C.D."/>
        </authorList>
    </citation>
    <scope>GENOME REANNOTATION</scope>
    <source>
        <strain>cv. Columbia</strain>
    </source>
</reference>
<reference key="3">
    <citation type="journal article" date="2003" name="Science">
        <title>Empirical analysis of transcriptional activity in the Arabidopsis genome.</title>
        <authorList>
            <person name="Yamada K."/>
            <person name="Lim J."/>
            <person name="Dale J.M."/>
            <person name="Chen H."/>
            <person name="Shinn P."/>
            <person name="Palm C.J."/>
            <person name="Southwick A.M."/>
            <person name="Wu H.C."/>
            <person name="Kim C.J."/>
            <person name="Nguyen M."/>
            <person name="Pham P.K."/>
            <person name="Cheuk R.F."/>
            <person name="Karlin-Newmann G."/>
            <person name="Liu S.X."/>
            <person name="Lam B."/>
            <person name="Sakano H."/>
            <person name="Wu T."/>
            <person name="Yu G."/>
            <person name="Miranda M."/>
            <person name="Quach H.L."/>
            <person name="Tripp M."/>
            <person name="Chang C.H."/>
            <person name="Lee J.M."/>
            <person name="Toriumi M.J."/>
            <person name="Chan M.M."/>
            <person name="Tang C.C."/>
            <person name="Onodera C.S."/>
            <person name="Deng J.M."/>
            <person name="Akiyama K."/>
            <person name="Ansari Y."/>
            <person name="Arakawa T."/>
            <person name="Banh J."/>
            <person name="Banno F."/>
            <person name="Bowser L."/>
            <person name="Brooks S.Y."/>
            <person name="Carninci P."/>
            <person name="Chao Q."/>
            <person name="Choy N."/>
            <person name="Enju A."/>
            <person name="Goldsmith A.D."/>
            <person name="Gurjal M."/>
            <person name="Hansen N.F."/>
            <person name="Hayashizaki Y."/>
            <person name="Johnson-Hopson C."/>
            <person name="Hsuan V.W."/>
            <person name="Iida K."/>
            <person name="Karnes M."/>
            <person name="Khan S."/>
            <person name="Koesema E."/>
            <person name="Ishida J."/>
            <person name="Jiang P.X."/>
            <person name="Jones T."/>
            <person name="Kawai J."/>
            <person name="Kamiya A."/>
            <person name="Meyers C."/>
            <person name="Nakajima M."/>
            <person name="Narusaka M."/>
            <person name="Seki M."/>
            <person name="Sakurai T."/>
            <person name="Satou M."/>
            <person name="Tamse R."/>
            <person name="Vaysberg M."/>
            <person name="Wallender E.K."/>
            <person name="Wong C."/>
            <person name="Yamamura Y."/>
            <person name="Yuan S."/>
            <person name="Shinozaki K."/>
            <person name="Davis R.W."/>
            <person name="Theologis A."/>
            <person name="Ecker J.R."/>
        </authorList>
    </citation>
    <scope>NUCLEOTIDE SEQUENCE [LARGE SCALE MRNA]</scope>
    <source>
        <strain>cv. Columbia</strain>
    </source>
</reference>
<reference key="4">
    <citation type="submission" date="2002-03" db="EMBL/GenBank/DDBJ databases">
        <title>Full-length cDNA from Arabidopsis thaliana.</title>
        <authorList>
            <person name="Brover V.V."/>
            <person name="Troukhan M.E."/>
            <person name="Alexandrov N.A."/>
            <person name="Lu Y.-P."/>
            <person name="Flavell R.B."/>
            <person name="Feldmann K.A."/>
        </authorList>
    </citation>
    <scope>NUCLEOTIDE SEQUENCE [LARGE SCALE MRNA]</scope>
</reference>
<reference key="5">
    <citation type="submission" date="2006-07" db="EMBL/GenBank/DDBJ databases">
        <title>Large-scale analysis of RIKEN Arabidopsis full-length (RAFL) cDNAs.</title>
        <authorList>
            <person name="Totoki Y."/>
            <person name="Seki M."/>
            <person name="Ishida J."/>
            <person name="Nakajima M."/>
            <person name="Enju A."/>
            <person name="Kamiya A."/>
            <person name="Narusaka M."/>
            <person name="Shin-i T."/>
            <person name="Nakagawa M."/>
            <person name="Sakamoto N."/>
            <person name="Oishi K."/>
            <person name="Kohara Y."/>
            <person name="Kobayashi M."/>
            <person name="Toyoda A."/>
            <person name="Sakaki Y."/>
            <person name="Sakurai T."/>
            <person name="Iida K."/>
            <person name="Akiyama K."/>
            <person name="Satou M."/>
            <person name="Toyoda T."/>
            <person name="Konagaya A."/>
            <person name="Carninci P."/>
            <person name="Kawai J."/>
            <person name="Hayashizaki Y."/>
            <person name="Shinozaki K."/>
        </authorList>
    </citation>
    <scope>NUCLEOTIDE SEQUENCE [LARGE SCALE MRNA]</scope>
    <source>
        <strain>cv. Columbia</strain>
    </source>
</reference>
<reference key="6">
    <citation type="journal article" date="2006" name="J. Biol. Chem.">
        <title>MUBS: a family of ubiquitin-fold proteins that are plasma membrane-anchored by prenylation.</title>
        <authorList>
            <person name="Downes B.P."/>
            <person name="Saracco S.A."/>
            <person name="Lee S.S."/>
            <person name="Crowell D.N."/>
            <person name="Vierstra R.D."/>
        </authorList>
    </citation>
    <scope>IDENTIFICATION</scope>
    <scope>NOMENCLATURE</scope>
    <scope>ISOPRENYLATION</scope>
    <scope>PALMITOYLATION AT CYS-115; CYS-117; CYS-119 AND CYS-124</scope>
    <scope>MUTAGENESIS OF CYS-115; CYS-117; CYS-119; CYS-124 AND 115-CYS--CYS-124</scope>
    <scope>TISSUE SPECIFICITY</scope>
    <scope>INDUCTION</scope>
    <scope>SUBCELLULAR LOCATION</scope>
</reference>
<name>MUB2_ARATH</name>
<proteinExistence type="evidence at protein level"/>
<sequence length="124" mass="13709">MAEVKDQLEIKFRLNDGSDIGPKLFPDATTVATLKETVVAQWPRDKENGPKTVKDVKLISAGRILENNKTVGDCRSPVGNFSGAVTTMHVIIQHQVTEKEKKKKKPKGDLKQNKCVCLCFGARC</sequence>
<keyword id="KW-1003">Cell membrane</keyword>
<keyword id="KW-0449">Lipoprotein</keyword>
<keyword id="KW-0472">Membrane</keyword>
<keyword id="KW-0564">Palmitate</keyword>
<keyword id="KW-1185">Reference proteome</keyword>
<gene>
    <name type="primary">MUB2</name>
    <name type="ordered locus">At5g15460</name>
    <name type="ORF">T20K14.70</name>
</gene>
<accession>Q8LCS8</accession>
<accession>Q9LF36</accession>
<dbReference type="EMBL" id="AL391143">
    <property type="protein sequence ID" value="CAC01745.1"/>
    <property type="status" value="ALT_SEQ"/>
    <property type="molecule type" value="Genomic_DNA"/>
</dbReference>
<dbReference type="EMBL" id="CP002688">
    <property type="protein sequence ID" value="AED92163.1"/>
    <property type="molecule type" value="Genomic_DNA"/>
</dbReference>
<dbReference type="EMBL" id="CP002688">
    <property type="protein sequence ID" value="AED92164.1"/>
    <property type="molecule type" value="Genomic_DNA"/>
</dbReference>
<dbReference type="EMBL" id="CP002688">
    <property type="protein sequence ID" value="ANM69826.1"/>
    <property type="molecule type" value="Genomic_DNA"/>
</dbReference>
<dbReference type="EMBL" id="BT006108">
    <property type="protein sequence ID" value="AAP04093.1"/>
    <property type="molecule type" value="mRNA"/>
</dbReference>
<dbReference type="EMBL" id="BT005773">
    <property type="protein sequence ID" value="AAO64177.1"/>
    <property type="molecule type" value="mRNA"/>
</dbReference>
<dbReference type="EMBL" id="AY086424">
    <property type="protein sequence ID" value="AAM63426.1"/>
    <property type="molecule type" value="mRNA"/>
</dbReference>
<dbReference type="EMBL" id="AK228599">
    <property type="protein sequence ID" value="BAF00514.1"/>
    <property type="molecule type" value="mRNA"/>
</dbReference>
<dbReference type="PIR" id="T51524">
    <property type="entry name" value="T51524"/>
</dbReference>
<dbReference type="RefSeq" id="NP_001318568.1">
    <property type="nucleotide sequence ID" value="NM_001343401.1"/>
</dbReference>
<dbReference type="RefSeq" id="NP_568315.1">
    <property type="nucleotide sequence ID" value="NM_121550.3"/>
</dbReference>
<dbReference type="RefSeq" id="NP_850824.1">
    <property type="nucleotide sequence ID" value="NM_180493.4"/>
</dbReference>
<dbReference type="SMR" id="Q8LCS8"/>
<dbReference type="BioGRID" id="16675">
    <property type="interactions" value="4"/>
</dbReference>
<dbReference type="FunCoup" id="Q8LCS8">
    <property type="interactions" value="486"/>
</dbReference>
<dbReference type="STRING" id="3702.Q8LCS8"/>
<dbReference type="PaxDb" id="3702-AT5G15460.2"/>
<dbReference type="ProteomicsDB" id="250741"/>
<dbReference type="EnsemblPlants" id="AT5G15460.1">
    <property type="protein sequence ID" value="AT5G15460.1"/>
    <property type="gene ID" value="AT5G15460"/>
</dbReference>
<dbReference type="EnsemblPlants" id="AT5G15460.2">
    <property type="protein sequence ID" value="AT5G15460.2"/>
    <property type="gene ID" value="AT5G15460"/>
</dbReference>
<dbReference type="EnsemblPlants" id="AT5G15460.4">
    <property type="protein sequence ID" value="AT5G15460.4"/>
    <property type="gene ID" value="AT5G15460"/>
</dbReference>
<dbReference type="GeneID" id="831399"/>
<dbReference type="Gramene" id="AT5G15460.1">
    <property type="protein sequence ID" value="AT5G15460.1"/>
    <property type="gene ID" value="AT5G15460"/>
</dbReference>
<dbReference type="Gramene" id="AT5G15460.2">
    <property type="protein sequence ID" value="AT5G15460.2"/>
    <property type="gene ID" value="AT5G15460"/>
</dbReference>
<dbReference type="Gramene" id="AT5G15460.4">
    <property type="protein sequence ID" value="AT5G15460.4"/>
    <property type="gene ID" value="AT5G15460"/>
</dbReference>
<dbReference type="KEGG" id="ath:AT5G15460"/>
<dbReference type="Araport" id="AT5G15460"/>
<dbReference type="TAIR" id="AT5G15460">
    <property type="gene designation" value="MUB2"/>
</dbReference>
<dbReference type="eggNOG" id="ENOG502RZYK">
    <property type="taxonomic scope" value="Eukaryota"/>
</dbReference>
<dbReference type="HOGENOM" id="CLU_136465_1_0_1"/>
<dbReference type="InParanoid" id="Q8LCS8"/>
<dbReference type="OMA" id="MAEVKDQ"/>
<dbReference type="PhylomeDB" id="Q8LCS8"/>
<dbReference type="PRO" id="PR:Q8LCS8"/>
<dbReference type="Proteomes" id="UP000006548">
    <property type="component" value="Chromosome 5"/>
</dbReference>
<dbReference type="ExpressionAtlas" id="Q8LCS8">
    <property type="expression patterns" value="baseline and differential"/>
</dbReference>
<dbReference type="GO" id="GO:0005886">
    <property type="term" value="C:plasma membrane"/>
    <property type="evidence" value="ECO:0007669"/>
    <property type="project" value="UniProtKB-SubCell"/>
</dbReference>
<dbReference type="CDD" id="cd01814">
    <property type="entry name" value="Ubl_MUBs_plant"/>
    <property type="match status" value="1"/>
</dbReference>
<dbReference type="Gene3D" id="3.10.20.90">
    <property type="entry name" value="Phosphatidylinositol 3-kinase Catalytic Subunit, Chain A, domain 1"/>
    <property type="match status" value="1"/>
</dbReference>
<dbReference type="InterPro" id="IPR017000">
    <property type="entry name" value="MUB"/>
</dbReference>
<dbReference type="InterPro" id="IPR029071">
    <property type="entry name" value="Ubiquitin-like_domsf"/>
</dbReference>
<dbReference type="InterPro" id="IPR040015">
    <property type="entry name" value="UBL3-like"/>
</dbReference>
<dbReference type="InterPro" id="IPR039540">
    <property type="entry name" value="UBL3-like_ubiquitin_dom"/>
</dbReference>
<dbReference type="PANTHER" id="PTHR13169:SF26">
    <property type="entry name" value="MEMBRANE-ANCHORED UBIQUITIN-FOLD PROTEIN 2"/>
    <property type="match status" value="1"/>
</dbReference>
<dbReference type="PANTHER" id="PTHR13169">
    <property type="entry name" value="UBIQUITIN-LIKE PROTEIN 3 HCG-1 PROTEIN"/>
    <property type="match status" value="1"/>
</dbReference>
<dbReference type="Pfam" id="PF13881">
    <property type="entry name" value="Rad60-SLD_2"/>
    <property type="match status" value="1"/>
</dbReference>
<dbReference type="PIRSF" id="PIRSF032572">
    <property type="entry name" value="MUB"/>
    <property type="match status" value="1"/>
</dbReference>
<dbReference type="SUPFAM" id="SSF54236">
    <property type="entry name" value="Ubiquitin-like"/>
    <property type="match status" value="1"/>
</dbReference>